<evidence type="ECO:0000255" key="1">
    <source>
        <dbReference type="HAMAP-Rule" id="MF_01596"/>
    </source>
</evidence>
<protein>
    <recommendedName>
        <fullName evidence="1">PhoP/PhoQ regulator MgrB</fullName>
    </recommendedName>
</protein>
<accession>C4ZZI2</accession>
<sequence length="47" mass="5552">MKKFRWVVLVVVVLACLLLWAQVFNMMCDQDVQFFSGICAINQFIPW</sequence>
<reference key="1">
    <citation type="journal article" date="2009" name="J. Bacteriol.">
        <title>Genomic sequencing reveals regulatory mutations and recombinational events in the widely used MC4100 lineage of Escherichia coli K-12.</title>
        <authorList>
            <person name="Ferenci T."/>
            <person name="Zhou Z."/>
            <person name="Betteridge T."/>
            <person name="Ren Y."/>
            <person name="Liu Y."/>
            <person name="Feng L."/>
            <person name="Reeves P.R."/>
            <person name="Wang L."/>
        </authorList>
    </citation>
    <scope>NUCLEOTIDE SEQUENCE [LARGE SCALE GENOMIC DNA]</scope>
    <source>
        <strain>K12 / MC4100 / BW2952</strain>
    </source>
</reference>
<keyword id="KW-0997">Cell inner membrane</keyword>
<keyword id="KW-1003">Cell membrane</keyword>
<keyword id="KW-0472">Membrane</keyword>
<keyword id="KW-0812">Transmembrane</keyword>
<keyword id="KW-1133">Transmembrane helix</keyword>
<gene>
    <name evidence="1" type="primary">mgrB</name>
    <name type="ordered locus">BWG_1639</name>
</gene>
<feature type="chain" id="PRO_1000215673" description="PhoP/PhoQ regulator MgrB">
    <location>
        <begin position="1"/>
        <end position="47"/>
    </location>
</feature>
<feature type="transmembrane region" description="Helical" evidence="1">
    <location>
        <begin position="6"/>
        <end position="26"/>
    </location>
</feature>
<proteinExistence type="inferred from homology"/>
<name>MGRB_ECOBW</name>
<comment type="function">
    <text evidence="1">PhoP-regulated transcription is redox-sensitive, being activated when the periplasm becomes more reducing. MgrB acts between DsbA/DsbB and PhoP/PhoQ in this pathway. Represses PhoP/PhoQ signaling, possibly by binding to the periplasmic domain of PhoQ, altering its activity and that of downstream effector PhoP.</text>
</comment>
<comment type="subunit">
    <text evidence="1">May form homooligomers. Probably interacts with the periplasmic domain of PhoQ.</text>
</comment>
<comment type="subcellular location">
    <subcellularLocation>
        <location evidence="1">Cell inner membrane</location>
        <topology evidence="1">Single-pass membrane protein</topology>
    </subcellularLocation>
</comment>
<comment type="similarity">
    <text evidence="1">Belongs to the MgrB family.</text>
</comment>
<dbReference type="EMBL" id="CP001396">
    <property type="protein sequence ID" value="ACR64881.1"/>
    <property type="molecule type" value="Genomic_DNA"/>
</dbReference>
<dbReference type="RefSeq" id="WP_000714550.1">
    <property type="nucleotide sequence ID" value="NC_012759.1"/>
</dbReference>
<dbReference type="SMR" id="C4ZZI2"/>
<dbReference type="GeneID" id="93776075"/>
<dbReference type="KEGG" id="ebw:BWG_1639"/>
<dbReference type="HOGENOM" id="CLU_208030_1_0_6"/>
<dbReference type="GO" id="GO:0005886">
    <property type="term" value="C:plasma membrane"/>
    <property type="evidence" value="ECO:0007669"/>
    <property type="project" value="UniProtKB-SubCell"/>
</dbReference>
<dbReference type="GO" id="GO:0070298">
    <property type="term" value="P:negative regulation of phosphorelay signal transduction system"/>
    <property type="evidence" value="ECO:0007669"/>
    <property type="project" value="UniProtKB-UniRule"/>
</dbReference>
<dbReference type="HAMAP" id="MF_01596">
    <property type="entry name" value="MgrB"/>
    <property type="match status" value="1"/>
</dbReference>
<dbReference type="InterPro" id="IPR020907">
    <property type="entry name" value="MgrB"/>
</dbReference>
<dbReference type="NCBIfam" id="NF007635">
    <property type="entry name" value="PRK10299.1"/>
    <property type="match status" value="1"/>
</dbReference>
<dbReference type="Pfam" id="PF13998">
    <property type="entry name" value="MgrB"/>
    <property type="match status" value="1"/>
</dbReference>
<dbReference type="PROSITE" id="PS51257">
    <property type="entry name" value="PROKAR_LIPOPROTEIN"/>
    <property type="match status" value="1"/>
</dbReference>
<organism>
    <name type="scientific">Escherichia coli (strain K12 / MC4100 / BW2952)</name>
    <dbReference type="NCBI Taxonomy" id="595496"/>
    <lineage>
        <taxon>Bacteria</taxon>
        <taxon>Pseudomonadati</taxon>
        <taxon>Pseudomonadota</taxon>
        <taxon>Gammaproteobacteria</taxon>
        <taxon>Enterobacterales</taxon>
        <taxon>Enterobacteriaceae</taxon>
        <taxon>Escherichia</taxon>
    </lineage>
</organism>